<sequence>MTGNIVARRYARALFALGKKSGLSDLETFGNDLAALAGTLETAPELVRMFRNPVFTPDEKRNVIAKLLDKLKVCPTVRNFCLLLADRERLAFIQDIQAYYGILLDAEKGVIRGELVTAIELANAKRDKVKAQLEAQAGRKLELGFSVDKNILGGVVLKVGDRILDASLRAQLGILKDNIKRGE</sequence>
<organism>
    <name type="scientific">Nitratidesulfovibrio vulgaris (strain DP4)</name>
    <name type="common">Desulfovibrio vulgaris</name>
    <dbReference type="NCBI Taxonomy" id="391774"/>
    <lineage>
        <taxon>Bacteria</taxon>
        <taxon>Pseudomonadati</taxon>
        <taxon>Thermodesulfobacteriota</taxon>
        <taxon>Desulfovibrionia</taxon>
        <taxon>Desulfovibrionales</taxon>
        <taxon>Desulfovibrionaceae</taxon>
        <taxon>Nitratidesulfovibrio</taxon>
    </lineage>
</organism>
<name>ATPD_NITV4</name>
<comment type="function">
    <text evidence="1">F(1)F(0) ATP synthase produces ATP from ADP in the presence of a proton or sodium gradient. F-type ATPases consist of two structural domains, F(1) containing the extramembraneous catalytic core and F(0) containing the membrane proton channel, linked together by a central stalk and a peripheral stalk. During catalysis, ATP synthesis in the catalytic domain of F(1) is coupled via a rotary mechanism of the central stalk subunits to proton translocation.</text>
</comment>
<comment type="function">
    <text evidence="1">This protein is part of the stalk that links CF(0) to CF(1). It either transmits conformational changes from CF(0) to CF(1) or is implicated in proton conduction.</text>
</comment>
<comment type="subunit">
    <text evidence="1">F-type ATPases have 2 components, F(1) - the catalytic core - and F(0) - the membrane proton channel. F(1) has five subunits: alpha(3), beta(3), gamma(1), delta(1), epsilon(1). F(0) has three main subunits: a(1), b(2) and c(10-14). The alpha and beta chains form an alternating ring which encloses part of the gamma chain. F(1) is attached to F(0) by a central stalk formed by the gamma and epsilon chains, while a peripheral stalk is formed by the delta and b chains.</text>
</comment>
<comment type="subcellular location">
    <subcellularLocation>
        <location evidence="1">Cell inner membrane</location>
        <topology evidence="1">Peripheral membrane protein</topology>
    </subcellularLocation>
</comment>
<comment type="similarity">
    <text evidence="1">Belongs to the ATPase delta chain family.</text>
</comment>
<evidence type="ECO:0000255" key="1">
    <source>
        <dbReference type="HAMAP-Rule" id="MF_01416"/>
    </source>
</evidence>
<dbReference type="EMBL" id="CP000527">
    <property type="protein sequence ID" value="ABM29208.1"/>
    <property type="molecule type" value="Genomic_DNA"/>
</dbReference>
<dbReference type="RefSeq" id="WP_010938079.1">
    <property type="nucleotide sequence ID" value="NC_008751.1"/>
</dbReference>
<dbReference type="SMR" id="A1VFJ2"/>
<dbReference type="KEGG" id="dvl:Dvul_2192"/>
<dbReference type="HOGENOM" id="CLU_085114_4_1_7"/>
<dbReference type="Proteomes" id="UP000009173">
    <property type="component" value="Chromosome"/>
</dbReference>
<dbReference type="GO" id="GO:0005886">
    <property type="term" value="C:plasma membrane"/>
    <property type="evidence" value="ECO:0007669"/>
    <property type="project" value="UniProtKB-SubCell"/>
</dbReference>
<dbReference type="GO" id="GO:0045259">
    <property type="term" value="C:proton-transporting ATP synthase complex"/>
    <property type="evidence" value="ECO:0007669"/>
    <property type="project" value="UniProtKB-KW"/>
</dbReference>
<dbReference type="GO" id="GO:0046933">
    <property type="term" value="F:proton-transporting ATP synthase activity, rotational mechanism"/>
    <property type="evidence" value="ECO:0007669"/>
    <property type="project" value="UniProtKB-UniRule"/>
</dbReference>
<dbReference type="Gene3D" id="1.10.520.20">
    <property type="entry name" value="N-terminal domain of the delta subunit of the F1F0-ATP synthase"/>
    <property type="match status" value="1"/>
</dbReference>
<dbReference type="HAMAP" id="MF_01416">
    <property type="entry name" value="ATP_synth_delta_bact"/>
    <property type="match status" value="1"/>
</dbReference>
<dbReference type="InterPro" id="IPR026015">
    <property type="entry name" value="ATP_synth_OSCP/delta_N_sf"/>
</dbReference>
<dbReference type="InterPro" id="IPR020781">
    <property type="entry name" value="ATPase_OSCP/d_CS"/>
</dbReference>
<dbReference type="InterPro" id="IPR000711">
    <property type="entry name" value="ATPase_OSCP/dsu"/>
</dbReference>
<dbReference type="NCBIfam" id="TIGR01145">
    <property type="entry name" value="ATP_synt_delta"/>
    <property type="match status" value="1"/>
</dbReference>
<dbReference type="PANTHER" id="PTHR11910">
    <property type="entry name" value="ATP SYNTHASE DELTA CHAIN"/>
    <property type="match status" value="1"/>
</dbReference>
<dbReference type="Pfam" id="PF00213">
    <property type="entry name" value="OSCP"/>
    <property type="match status" value="1"/>
</dbReference>
<dbReference type="PRINTS" id="PR00125">
    <property type="entry name" value="ATPASEDELTA"/>
</dbReference>
<dbReference type="SUPFAM" id="SSF47928">
    <property type="entry name" value="N-terminal domain of the delta subunit of the F1F0-ATP synthase"/>
    <property type="match status" value="1"/>
</dbReference>
<dbReference type="PROSITE" id="PS00389">
    <property type="entry name" value="ATPASE_DELTA"/>
    <property type="match status" value="1"/>
</dbReference>
<accession>A1VFJ2</accession>
<protein>
    <recommendedName>
        <fullName evidence="1">ATP synthase subunit delta</fullName>
    </recommendedName>
    <alternativeName>
        <fullName evidence="1">ATP synthase F(1) sector subunit delta</fullName>
    </alternativeName>
    <alternativeName>
        <fullName evidence="1">F-type ATPase subunit delta</fullName>
        <shortName evidence="1">F-ATPase subunit delta</shortName>
    </alternativeName>
</protein>
<reference key="1">
    <citation type="journal article" date="2009" name="Environ. Microbiol.">
        <title>Contribution of mobile genetic elements to Desulfovibrio vulgaris genome plasticity.</title>
        <authorList>
            <person name="Walker C.B."/>
            <person name="Stolyar S."/>
            <person name="Chivian D."/>
            <person name="Pinel N."/>
            <person name="Gabster J.A."/>
            <person name="Dehal P.S."/>
            <person name="He Z."/>
            <person name="Yang Z.K."/>
            <person name="Yen H.C."/>
            <person name="Zhou J."/>
            <person name="Wall J.D."/>
            <person name="Hazen T.C."/>
            <person name="Arkin A.P."/>
            <person name="Stahl D.A."/>
        </authorList>
    </citation>
    <scope>NUCLEOTIDE SEQUENCE [LARGE SCALE GENOMIC DNA]</scope>
    <source>
        <strain>DP4</strain>
    </source>
</reference>
<feature type="chain" id="PRO_0000370967" description="ATP synthase subunit delta">
    <location>
        <begin position="1"/>
        <end position="183"/>
    </location>
</feature>
<proteinExistence type="inferred from homology"/>
<gene>
    <name evidence="1" type="primary">atpH</name>
    <name type="ordered locus">Dvul_2192</name>
</gene>
<keyword id="KW-0066">ATP synthesis</keyword>
<keyword id="KW-0997">Cell inner membrane</keyword>
<keyword id="KW-1003">Cell membrane</keyword>
<keyword id="KW-0139">CF(1)</keyword>
<keyword id="KW-0375">Hydrogen ion transport</keyword>
<keyword id="KW-0406">Ion transport</keyword>
<keyword id="KW-0472">Membrane</keyword>
<keyword id="KW-0813">Transport</keyword>